<keyword id="KW-0903">Direct protein sequencing</keyword>
<keyword id="KW-0326">Glycosidase</keyword>
<keyword id="KW-0378">Hydrolase</keyword>
<comment type="catalytic activity">
    <reaction>
        <text>Hydrolysis of terminal, non-reducing (1-&gt;4)-linked alpha-D-glucose residues with release of alpha-D-glucose.</text>
        <dbReference type="EC" id="3.2.1.20"/>
    </reaction>
</comment>
<comment type="similarity">
    <text evidence="1">Belongs to the glycosyl hydrolase 13 family.</text>
</comment>
<organism>
    <name type="scientific">Bacillus thermoamyloliquefaciens</name>
    <dbReference type="NCBI Taxonomy" id="1425"/>
    <lineage>
        <taxon>Bacteria</taxon>
        <taxon>Bacillati</taxon>
        <taxon>Bacillota</taxon>
        <taxon>Bacilli</taxon>
        <taxon>Bacillales</taxon>
        <taxon>Bacillaceae</taxon>
        <taxon>Bacillus</taxon>
    </lineage>
</organism>
<feature type="chain" id="PRO_0000054326" description="Maltase">
    <location>
        <begin position="1"/>
        <end position="15" status="greater than"/>
    </location>
</feature>
<feature type="non-terminal residue">
    <location>
        <position position="15"/>
    </location>
</feature>
<dbReference type="EC" id="3.2.1.20"/>
<dbReference type="PIR" id="S21240">
    <property type="entry name" value="S21240"/>
</dbReference>
<dbReference type="CAZy" id="GH13">
    <property type="family name" value="Glycoside Hydrolase Family 13"/>
</dbReference>
<dbReference type="GO" id="GO:0004558">
    <property type="term" value="F:alpha-1,4-glucosidase activity"/>
    <property type="evidence" value="ECO:0007669"/>
    <property type="project" value="UniProtKB-EC"/>
</dbReference>
<sequence length="15" mass="1929">MKKAWWKEGVVYQIY</sequence>
<name>MALT_BACTQ</name>
<evidence type="ECO:0000305" key="1"/>
<accession>P80072</accession>
<reference key="1">
    <citation type="journal article" date="1992" name="Eur. J. Biochem.">
        <title>Assignment of Bacillus thermoamyloliquefaciens KP1071 alpha-glucosidase I to an exo-alpha-1,4-glucosidase, and its striking similarity to bacillary oligo-1,6-glucosidases in N-terminal sequence and in structural parameters calculated from the amino acid composition.</title>
        <authorList>
            <person name="Suzuki Y."/>
            <person name="Yonezawa K."/>
            <person name="Hattori M."/>
            <person name="Takii Y."/>
        </authorList>
    </citation>
    <scope>PROTEIN SEQUENCE</scope>
    <source>
        <strain>KP1071 / FERM P8477</strain>
    </source>
</reference>
<proteinExistence type="evidence at protein level"/>
<protein>
    <recommendedName>
        <fullName>Maltase</fullName>
        <ecNumber>3.2.1.20</ecNumber>
    </recommendedName>
    <alternativeName>
        <fullName>Alpha-glucosidase I</fullName>
    </alternativeName>
</protein>